<dbReference type="EMBL" id="X79710">
    <property type="protein sequence ID" value="CAA56149.1"/>
    <property type="molecule type" value="Genomic_DNA"/>
</dbReference>
<dbReference type="EMBL" id="S65569">
    <property type="protein sequence ID" value="AAD13966.1"/>
    <property type="molecule type" value="Genomic_DNA"/>
</dbReference>
<dbReference type="Proteomes" id="UP000694395">
    <property type="component" value="Unplaced"/>
</dbReference>
<dbReference type="GO" id="GO:0005615">
    <property type="term" value="C:extracellular space"/>
    <property type="evidence" value="ECO:0000250"/>
    <property type="project" value="UniProtKB"/>
</dbReference>
<dbReference type="GO" id="GO:0005183">
    <property type="term" value="F:gonadotropin hormone-releasing hormone activity"/>
    <property type="evidence" value="ECO:0007669"/>
    <property type="project" value="TreeGrafter"/>
</dbReference>
<dbReference type="GO" id="GO:0031530">
    <property type="term" value="F:gonadotropin-releasing hormone receptor binding"/>
    <property type="evidence" value="ECO:0007669"/>
    <property type="project" value="TreeGrafter"/>
</dbReference>
<dbReference type="InterPro" id="IPR002012">
    <property type="entry name" value="GnRH"/>
</dbReference>
<dbReference type="InterPro" id="IPR019792">
    <property type="entry name" value="Gonadoliberin"/>
</dbReference>
<dbReference type="PANTHER" id="PTHR10522">
    <property type="entry name" value="GONADOLIBERIN"/>
    <property type="match status" value="1"/>
</dbReference>
<dbReference type="PANTHER" id="PTHR10522:SF6">
    <property type="entry name" value="PROGONADOLIBERIN-2"/>
    <property type="match status" value="1"/>
</dbReference>
<dbReference type="Pfam" id="PF00446">
    <property type="entry name" value="GnRH"/>
    <property type="match status" value="1"/>
</dbReference>
<dbReference type="PROSITE" id="PS00473">
    <property type="entry name" value="GNRH"/>
    <property type="match status" value="1"/>
</dbReference>
<feature type="signal peptide" evidence="1">
    <location>
        <begin position="1" status="less than"/>
        <end position="15"/>
    </location>
</feature>
<feature type="chain" id="PRO_0000012511" description="Progonadoliberin-3">
    <location>
        <begin position="16"/>
        <end position="74"/>
    </location>
</feature>
<feature type="peptide" id="PRO_0000012512" description="Gonadoliberin-3">
    <location>
        <begin position="16"/>
        <end position="25"/>
    </location>
</feature>
<feature type="peptide" id="PRO_0000012513" description="GnRH-associated peptide 3">
    <location>
        <begin position="29"/>
        <end position="74"/>
    </location>
</feature>
<feature type="modified residue" description="Pyrrolidone carboxylic acid" evidence="2">
    <location>
        <position position="16"/>
    </location>
</feature>
<feature type="modified residue" description="Glycine amide" evidence="2">
    <location>
        <position position="25"/>
    </location>
</feature>
<feature type="non-terminal residue">
    <location>
        <position position="1"/>
    </location>
</feature>
<proteinExistence type="inferred from homology"/>
<keyword id="KW-0027">Amidation</keyword>
<keyword id="KW-0165">Cleavage on pair of basic residues</keyword>
<keyword id="KW-0372">Hormone</keyword>
<keyword id="KW-0873">Pyrrolidone carboxylic acid</keyword>
<keyword id="KW-0964">Secreted</keyword>
<keyword id="KW-0732">Signal</keyword>
<comment type="function">
    <text>Stimulates the secretion of gonadotropins.</text>
</comment>
<comment type="subcellular location">
    <subcellularLocation>
        <location>Secreted</location>
    </subcellularLocation>
</comment>
<comment type="similarity">
    <text evidence="3">Belongs to the GnRH family.</text>
</comment>
<name>GON3_ONCMY</name>
<organism>
    <name type="scientific">Oncorhynchus mykiss</name>
    <name type="common">Rainbow trout</name>
    <name type="synonym">Salmo gairdneri</name>
    <dbReference type="NCBI Taxonomy" id="8022"/>
    <lineage>
        <taxon>Eukaryota</taxon>
        <taxon>Metazoa</taxon>
        <taxon>Chordata</taxon>
        <taxon>Craniata</taxon>
        <taxon>Vertebrata</taxon>
        <taxon>Euteleostomi</taxon>
        <taxon>Actinopterygii</taxon>
        <taxon>Neopterygii</taxon>
        <taxon>Teleostei</taxon>
        <taxon>Protacanthopterygii</taxon>
        <taxon>Salmoniformes</taxon>
        <taxon>Salmonidae</taxon>
        <taxon>Salmoninae</taxon>
        <taxon>Oncorhynchus</taxon>
    </lineage>
</organism>
<sequence length="74" mass="8254">VQVVVLALVAQVTLSQHWSYGWLPGGKRSVGELEATIKMMDTGGVVVLPEETSAHVSERLRPYDVILKKWMPHK</sequence>
<reference key="1">
    <citation type="journal article" date="1992" name="Mol. Mar. Biol. Biotechnol.">
        <title>The salmon gonadotrophin-releasing hormone encoding gene in salmonids.</title>
        <authorList>
            <person name="Klungland H."/>
            <person name="Anderson O."/>
            <person name="Alestroem P."/>
        </authorList>
    </citation>
    <scope>NUCLEOTIDE SEQUENCE [GENOMIC DNA]</scope>
    <source>
        <tissue>Muscle</tissue>
    </source>
</reference>
<reference key="2">
    <citation type="journal article" date="1992" name="Mol. Mar. Biol. Biotechnol.">
        <title>Fish gonadotropin-releasing hormone gene and molecular approaches for control of sexual maturation: development of a transgenic fish model.</title>
        <authorList>
            <person name="Alestroem P."/>
            <person name="Kisen G."/>
            <person name="Klungland H."/>
            <person name="Andersen O."/>
        </authorList>
    </citation>
    <scope>NUCLEOTIDE SEQUENCE [GENOMIC DNA] OF 1-65</scope>
</reference>
<gene>
    <name type="primary">gnrh3</name>
</gene>
<protein>
    <recommendedName>
        <fullName>Progonadoliberin-3</fullName>
    </recommendedName>
    <alternativeName>
        <fullName>Progonadoliberin III</fullName>
    </alternativeName>
    <component>
        <recommendedName>
            <fullName>Gonadoliberin-3</fullName>
        </recommendedName>
        <alternativeName>
            <fullName>Gonadoliberin III</fullName>
        </alternativeName>
        <alternativeName>
            <fullName>Gonadotropin-releasing hormone III</fullName>
            <shortName>GnRH III</shortName>
        </alternativeName>
        <alternativeName>
            <fullName>Luliberin III</fullName>
        </alternativeName>
        <alternativeName>
            <fullName>Luteinizing hormone-releasing hormone III</fullName>
            <shortName>LH-RH III</shortName>
        </alternativeName>
    </component>
    <component>
        <recommendedName>
            <fullName>GnRH-associated peptide 3</fullName>
        </recommendedName>
        <alternativeName>
            <fullName>GnRH-associated peptide III</fullName>
        </alternativeName>
    </component>
</protein>
<evidence type="ECO:0000250" key="1"/>
<evidence type="ECO:0000250" key="2">
    <source>
        <dbReference type="UniProtKB" id="P69105"/>
    </source>
</evidence>
<evidence type="ECO:0000305" key="3"/>
<accession>P55246</accession>